<organism>
    <name type="scientific">Roseiflexus sp. (strain RS-1)</name>
    <dbReference type="NCBI Taxonomy" id="357808"/>
    <lineage>
        <taxon>Bacteria</taxon>
        <taxon>Bacillati</taxon>
        <taxon>Chloroflexota</taxon>
        <taxon>Chloroflexia</taxon>
        <taxon>Chloroflexales</taxon>
        <taxon>Roseiflexineae</taxon>
        <taxon>Roseiflexaceae</taxon>
        <taxon>Roseiflexus</taxon>
    </lineage>
</organism>
<reference key="1">
    <citation type="submission" date="2007-04" db="EMBL/GenBank/DDBJ databases">
        <title>Complete sequence of Roseiflexus sp. RS-1.</title>
        <authorList>
            <consortium name="US DOE Joint Genome Institute"/>
            <person name="Copeland A."/>
            <person name="Lucas S."/>
            <person name="Lapidus A."/>
            <person name="Barry K."/>
            <person name="Detter J.C."/>
            <person name="Glavina del Rio T."/>
            <person name="Hammon N."/>
            <person name="Israni S."/>
            <person name="Dalin E."/>
            <person name="Tice H."/>
            <person name="Pitluck S."/>
            <person name="Chertkov O."/>
            <person name="Brettin T."/>
            <person name="Bruce D."/>
            <person name="Han C."/>
            <person name="Schmutz J."/>
            <person name="Larimer F."/>
            <person name="Land M."/>
            <person name="Hauser L."/>
            <person name="Kyrpides N."/>
            <person name="Mikhailova N."/>
            <person name="Bryant D.A."/>
            <person name="Richardson P."/>
        </authorList>
    </citation>
    <scope>NUCLEOTIDE SEQUENCE [LARGE SCALE GENOMIC DNA]</scope>
    <source>
        <strain>RS-1</strain>
    </source>
</reference>
<accession>A5UZH7</accession>
<keyword id="KW-1003">Cell membrane</keyword>
<keyword id="KW-0472">Membrane</keyword>
<keyword id="KW-0520">NAD</keyword>
<keyword id="KW-0874">Quinone</keyword>
<keyword id="KW-1278">Translocase</keyword>
<keyword id="KW-0813">Transport</keyword>
<keyword id="KW-0830">Ubiquinone</keyword>
<feature type="chain" id="PRO_0000357919" description="NADH-quinone oxidoreductase subunit D 2">
    <location>
        <begin position="1"/>
        <end position="417"/>
    </location>
</feature>
<gene>
    <name evidence="1" type="primary">nuoD2</name>
    <name type="ordered locus">RoseRS_3675</name>
</gene>
<name>NUOD2_ROSS1</name>
<protein>
    <recommendedName>
        <fullName evidence="1">NADH-quinone oxidoreductase subunit D 2</fullName>
        <ecNumber evidence="1">7.1.1.-</ecNumber>
    </recommendedName>
    <alternativeName>
        <fullName evidence="1">NADH dehydrogenase I subunit D 2</fullName>
    </alternativeName>
    <alternativeName>
        <fullName evidence="1">NDH-1 subunit D 2</fullName>
    </alternativeName>
</protein>
<proteinExistence type="inferred from homology"/>
<comment type="function">
    <text evidence="1">NDH-1 shuttles electrons from NADH, via FMN and iron-sulfur (Fe-S) centers, to quinones in the respiratory chain. The immediate electron acceptor for the enzyme in this species is believed to be ubiquinone. Couples the redox reaction to proton translocation (for every two electrons transferred, four hydrogen ions are translocated across the cytoplasmic membrane), and thus conserves the redox energy in a proton gradient.</text>
</comment>
<comment type="catalytic activity">
    <reaction evidence="1">
        <text>a quinone + NADH + 5 H(+)(in) = a quinol + NAD(+) + 4 H(+)(out)</text>
        <dbReference type="Rhea" id="RHEA:57888"/>
        <dbReference type="ChEBI" id="CHEBI:15378"/>
        <dbReference type="ChEBI" id="CHEBI:24646"/>
        <dbReference type="ChEBI" id="CHEBI:57540"/>
        <dbReference type="ChEBI" id="CHEBI:57945"/>
        <dbReference type="ChEBI" id="CHEBI:132124"/>
    </reaction>
</comment>
<comment type="subunit">
    <text evidence="1">NDH-1 is composed of 14 different subunits. Subunits NuoB, C, D, E, F, and G constitute the peripheral sector of the complex.</text>
</comment>
<comment type="subcellular location">
    <subcellularLocation>
        <location evidence="1">Cell membrane</location>
        <topology evidence="1">Peripheral membrane protein</topology>
        <orientation evidence="1">Cytoplasmic side</orientation>
    </subcellularLocation>
</comment>
<comment type="similarity">
    <text evidence="1">Belongs to the complex I 49 kDa subunit family.</text>
</comment>
<sequence>MTVAEIRARNLSIPAPSQITRPALAGEKETMVLNMGPHHPSTHGVLRLVVELDGETVVDVAPDIGFLHTGIEKTMESKTYQKAVVLTDRTDYLAPLSNNLSYVLAVEKLLGCEVPERATVARVLLVELQRIASHLVWLGTHALDLAAMSVFLYGFREREQILDIFELVSGARMMTSYFRVGGLAYDLPAGFDAAVEAFLQIMPGRIDEYEALLTDNPLWIERTQGIGAIDSEAAIALGLTGPGLRATGVAWDLRKTMPYCGYETYSFAIPTATHGDIYDRYLVRMAEMRESVSICRQALQRLRDIGPGPYMTSDRKIAPPPKSEITQSMEALIHHFKLWTEGFKPPRGDALAAVESPRGELATYIVSDGSAKPYRVHFRAPSFVNLQSLPHMARGHLVADLVALIASLDPVLGEVDR</sequence>
<dbReference type="EC" id="7.1.1.-" evidence="1"/>
<dbReference type="EMBL" id="CP000686">
    <property type="protein sequence ID" value="ABQ92030.1"/>
    <property type="molecule type" value="Genomic_DNA"/>
</dbReference>
<dbReference type="RefSeq" id="WP_011958372.1">
    <property type="nucleotide sequence ID" value="NC_009523.1"/>
</dbReference>
<dbReference type="SMR" id="A5UZH7"/>
<dbReference type="STRING" id="357808.RoseRS_3675"/>
<dbReference type="KEGG" id="rrs:RoseRS_3675"/>
<dbReference type="eggNOG" id="COG0649">
    <property type="taxonomic scope" value="Bacteria"/>
</dbReference>
<dbReference type="HOGENOM" id="CLU_015134_1_2_0"/>
<dbReference type="OrthoDB" id="9801496at2"/>
<dbReference type="Proteomes" id="UP000006554">
    <property type="component" value="Chromosome"/>
</dbReference>
<dbReference type="GO" id="GO:0005886">
    <property type="term" value="C:plasma membrane"/>
    <property type="evidence" value="ECO:0007669"/>
    <property type="project" value="UniProtKB-SubCell"/>
</dbReference>
<dbReference type="GO" id="GO:0051287">
    <property type="term" value="F:NAD binding"/>
    <property type="evidence" value="ECO:0007669"/>
    <property type="project" value="InterPro"/>
</dbReference>
<dbReference type="GO" id="GO:0050136">
    <property type="term" value="F:NADH:ubiquinone reductase (non-electrogenic) activity"/>
    <property type="evidence" value="ECO:0007669"/>
    <property type="project" value="UniProtKB-UniRule"/>
</dbReference>
<dbReference type="GO" id="GO:0048038">
    <property type="term" value="F:quinone binding"/>
    <property type="evidence" value="ECO:0007669"/>
    <property type="project" value="UniProtKB-KW"/>
</dbReference>
<dbReference type="Gene3D" id="1.10.645.10">
    <property type="entry name" value="Cytochrome-c3 Hydrogenase, chain B"/>
    <property type="match status" value="1"/>
</dbReference>
<dbReference type="HAMAP" id="MF_01358">
    <property type="entry name" value="NDH1_NuoD"/>
    <property type="match status" value="1"/>
</dbReference>
<dbReference type="InterPro" id="IPR001135">
    <property type="entry name" value="NADH_Q_OxRdtase_suD"/>
</dbReference>
<dbReference type="InterPro" id="IPR014029">
    <property type="entry name" value="NADH_UbQ_OxRdtase_49kDa_CS"/>
</dbReference>
<dbReference type="InterPro" id="IPR022885">
    <property type="entry name" value="NDH1_su_D/H"/>
</dbReference>
<dbReference type="InterPro" id="IPR029014">
    <property type="entry name" value="NiFe-Hase_large"/>
</dbReference>
<dbReference type="NCBIfam" id="TIGR01962">
    <property type="entry name" value="NuoD"/>
    <property type="match status" value="1"/>
</dbReference>
<dbReference type="NCBIfam" id="NF004739">
    <property type="entry name" value="PRK06075.1"/>
    <property type="match status" value="1"/>
</dbReference>
<dbReference type="PANTHER" id="PTHR11993:SF10">
    <property type="entry name" value="NADH DEHYDROGENASE [UBIQUINONE] IRON-SULFUR PROTEIN 2, MITOCHONDRIAL"/>
    <property type="match status" value="1"/>
</dbReference>
<dbReference type="PANTHER" id="PTHR11993">
    <property type="entry name" value="NADH-UBIQUINONE OXIDOREDUCTASE 49 KDA SUBUNIT"/>
    <property type="match status" value="1"/>
</dbReference>
<dbReference type="Pfam" id="PF00346">
    <property type="entry name" value="Complex1_49kDa"/>
    <property type="match status" value="1"/>
</dbReference>
<dbReference type="SUPFAM" id="SSF56762">
    <property type="entry name" value="HydB/Nqo4-like"/>
    <property type="match status" value="1"/>
</dbReference>
<dbReference type="PROSITE" id="PS00535">
    <property type="entry name" value="COMPLEX1_49K"/>
    <property type="match status" value="1"/>
</dbReference>
<evidence type="ECO:0000255" key="1">
    <source>
        <dbReference type="HAMAP-Rule" id="MF_01358"/>
    </source>
</evidence>